<feature type="chain" id="PRO_0000217676" description="Proteinase inhibitor IIB">
    <location>
        <begin position="1" status="less than"/>
        <end position="40" status="greater than"/>
    </location>
</feature>
<feature type="site" description="Reactive bond">
    <location>
        <begin position="26"/>
        <end position="27"/>
    </location>
</feature>
<feature type="disulfide bond" evidence="1">
    <location>
        <begin position="2"/>
        <end position="16"/>
    </location>
</feature>
<feature type="disulfide bond" evidence="1">
    <location>
        <begin position="6"/>
        <end position="28"/>
    </location>
</feature>
<feature type="disulfide bond" evidence="1">
    <location>
        <begin position="12"/>
        <end position="38"/>
    </location>
</feature>
<feature type="non-consecutive residues" evidence="2">
    <location>
        <begin position="14"/>
        <end position="15"/>
    </location>
</feature>
<feature type="non-terminal residue">
    <location>
        <position position="1"/>
    </location>
</feature>
<feature type="non-terminal residue">
    <location>
        <position position="40"/>
    </location>
</feature>
<organism>
    <name type="scientific">Solanum tuberosum</name>
    <name type="common">Potato</name>
    <dbReference type="NCBI Taxonomy" id="4113"/>
    <lineage>
        <taxon>Eukaryota</taxon>
        <taxon>Viridiplantae</taxon>
        <taxon>Streptophyta</taxon>
        <taxon>Embryophyta</taxon>
        <taxon>Tracheophyta</taxon>
        <taxon>Spermatophyta</taxon>
        <taxon>Magnoliopsida</taxon>
        <taxon>eudicotyledons</taxon>
        <taxon>Gunneridae</taxon>
        <taxon>Pentapetalae</taxon>
        <taxon>asterids</taxon>
        <taxon>lamiids</taxon>
        <taxon>Solanales</taxon>
        <taxon>Solanaceae</taxon>
        <taxon>Solanoideae</taxon>
        <taxon>Solaneae</taxon>
        <taxon>Solanum</taxon>
    </lineage>
</organism>
<evidence type="ECO:0000269" key="1">
    <source>
    </source>
</evidence>
<evidence type="ECO:0000305" key="2"/>
<protein>
    <recommendedName>
        <fullName>Proteinase inhibitor IIB</fullName>
    </recommendedName>
</protein>
<reference key="1">
    <citation type="journal article" date="1977" name="J. Biochem.">
        <title>Amino acid sequence of an active fragment of potato proteinase inhibitor IIb.</title>
        <authorList>
            <person name="Iwasaki T."/>
            <person name="Wada J."/>
            <person name="Kiyohara T."/>
            <person name="Yoshikawa M."/>
        </authorList>
    </citation>
    <scope>PROTEIN SEQUENCE</scope>
</reference>
<keyword id="KW-0903">Direct protein sequencing</keyword>
<keyword id="KW-1015">Disulfide bond</keyword>
<keyword id="KW-0646">Protease inhibitor</keyword>
<keyword id="KW-1185">Reference proteome</keyword>
<keyword id="KW-0964">Secreted</keyword>
<keyword id="KW-0722">Serine protease inhibitor</keyword>
<proteinExistence type="evidence at protein level"/>
<accession>P01082</accession>
<sequence>ICTNNCAGYKGCNYACPLNDHPIAYKSCEGEFDPKSKCPR</sequence>
<dbReference type="PIR" id="A01321">
    <property type="entry name" value="XKPO2B"/>
</dbReference>
<dbReference type="SMR" id="P01082"/>
<dbReference type="MEROPS" id="I20.001"/>
<dbReference type="InParanoid" id="P01082"/>
<dbReference type="Proteomes" id="UP000011115">
    <property type="component" value="Unassembled WGS sequence"/>
</dbReference>
<dbReference type="GO" id="GO:0005576">
    <property type="term" value="C:extracellular region"/>
    <property type="evidence" value="ECO:0007669"/>
    <property type="project" value="UniProtKB-SubCell"/>
</dbReference>
<dbReference type="GO" id="GO:0004867">
    <property type="term" value="F:serine-type endopeptidase inhibitor activity"/>
    <property type="evidence" value="ECO:0007669"/>
    <property type="project" value="UniProtKB-KW"/>
</dbReference>
<dbReference type="SUPFAM" id="SSF100897">
    <property type="entry name" value="Plant proteinase inhibitors"/>
    <property type="match status" value="1"/>
</dbReference>
<name>IP2B_SOLTU</name>
<comment type="function">
    <text>Inhibits chymotrypsin and subtilisin strongly.</text>
</comment>
<comment type="subcellular location">
    <subcellularLocation>
        <location>Secreted</location>
    </subcellularLocation>
</comment>
<comment type="similarity">
    <text evidence="2">Belongs to the protease inhibitor I20 (potato type II proteinase inhibitor) family.</text>
</comment>